<proteinExistence type="inferred from homology"/>
<accession>A1U2S9</accession>
<organism>
    <name type="scientific">Marinobacter nauticus (strain ATCC 700491 / DSM 11845 / VT8)</name>
    <name type="common">Marinobacter aquaeolei</name>
    <dbReference type="NCBI Taxonomy" id="351348"/>
    <lineage>
        <taxon>Bacteria</taxon>
        <taxon>Pseudomonadati</taxon>
        <taxon>Pseudomonadota</taxon>
        <taxon>Gammaproteobacteria</taxon>
        <taxon>Pseudomonadales</taxon>
        <taxon>Marinobacteraceae</taxon>
        <taxon>Marinobacter</taxon>
    </lineage>
</organism>
<feature type="chain" id="PRO_1000065296" description="Acetyl-coenzyme A synthetase">
    <location>
        <begin position="1"/>
        <end position="649"/>
    </location>
</feature>
<feature type="binding site" evidence="1">
    <location>
        <begin position="191"/>
        <end position="194"/>
    </location>
    <ligand>
        <name>CoA</name>
        <dbReference type="ChEBI" id="CHEBI:57287"/>
    </ligand>
</feature>
<feature type="binding site" evidence="1">
    <location>
        <position position="312"/>
    </location>
    <ligand>
        <name>CoA</name>
        <dbReference type="ChEBI" id="CHEBI:57287"/>
    </ligand>
</feature>
<feature type="binding site" evidence="1">
    <location>
        <position position="336"/>
    </location>
    <ligand>
        <name>CoA</name>
        <dbReference type="ChEBI" id="CHEBI:57287"/>
    </ligand>
</feature>
<feature type="binding site" evidence="1">
    <location>
        <begin position="388"/>
        <end position="390"/>
    </location>
    <ligand>
        <name>ATP</name>
        <dbReference type="ChEBI" id="CHEBI:30616"/>
    </ligand>
</feature>
<feature type="binding site" evidence="1">
    <location>
        <begin position="412"/>
        <end position="417"/>
    </location>
    <ligand>
        <name>ATP</name>
        <dbReference type="ChEBI" id="CHEBI:30616"/>
    </ligand>
</feature>
<feature type="binding site" evidence="1">
    <location>
        <position position="501"/>
    </location>
    <ligand>
        <name>ATP</name>
        <dbReference type="ChEBI" id="CHEBI:30616"/>
    </ligand>
</feature>
<feature type="binding site" evidence="1">
    <location>
        <position position="516"/>
    </location>
    <ligand>
        <name>ATP</name>
        <dbReference type="ChEBI" id="CHEBI:30616"/>
    </ligand>
</feature>
<feature type="binding site" evidence="1">
    <location>
        <position position="524"/>
    </location>
    <ligand>
        <name>CoA</name>
        <dbReference type="ChEBI" id="CHEBI:57287"/>
    </ligand>
</feature>
<feature type="binding site" evidence="1">
    <location>
        <position position="527"/>
    </location>
    <ligand>
        <name>ATP</name>
        <dbReference type="ChEBI" id="CHEBI:30616"/>
    </ligand>
</feature>
<feature type="binding site" evidence="1">
    <location>
        <position position="538"/>
    </location>
    <ligand>
        <name>Mg(2+)</name>
        <dbReference type="ChEBI" id="CHEBI:18420"/>
    </ligand>
</feature>
<feature type="binding site" evidence="1">
    <location>
        <position position="540"/>
    </location>
    <ligand>
        <name>Mg(2+)</name>
        <dbReference type="ChEBI" id="CHEBI:18420"/>
    </ligand>
</feature>
<feature type="binding site" evidence="1">
    <location>
        <position position="543"/>
    </location>
    <ligand>
        <name>Mg(2+)</name>
        <dbReference type="ChEBI" id="CHEBI:18420"/>
    </ligand>
</feature>
<feature type="binding site" evidence="1">
    <location>
        <position position="585"/>
    </location>
    <ligand>
        <name>CoA</name>
        <dbReference type="ChEBI" id="CHEBI:57287"/>
    </ligand>
</feature>
<feature type="modified residue" description="N6-acetyllysine" evidence="1">
    <location>
        <position position="610"/>
    </location>
</feature>
<dbReference type="EC" id="6.2.1.1" evidence="1"/>
<dbReference type="EMBL" id="CP000514">
    <property type="protein sequence ID" value="ABM19298.1"/>
    <property type="molecule type" value="Genomic_DNA"/>
</dbReference>
<dbReference type="RefSeq" id="WP_011785686.1">
    <property type="nucleotide sequence ID" value="NC_008740.1"/>
</dbReference>
<dbReference type="SMR" id="A1U2S9"/>
<dbReference type="STRING" id="351348.Maqu_2219"/>
<dbReference type="KEGG" id="maq:Maqu_2219"/>
<dbReference type="eggNOG" id="COG0365">
    <property type="taxonomic scope" value="Bacteria"/>
</dbReference>
<dbReference type="HOGENOM" id="CLU_000022_3_6_6"/>
<dbReference type="OrthoDB" id="9803968at2"/>
<dbReference type="Proteomes" id="UP000000998">
    <property type="component" value="Chromosome"/>
</dbReference>
<dbReference type="GO" id="GO:0005829">
    <property type="term" value="C:cytosol"/>
    <property type="evidence" value="ECO:0007669"/>
    <property type="project" value="TreeGrafter"/>
</dbReference>
<dbReference type="GO" id="GO:0003987">
    <property type="term" value="F:acetate-CoA ligase activity"/>
    <property type="evidence" value="ECO:0007669"/>
    <property type="project" value="UniProtKB-UniRule"/>
</dbReference>
<dbReference type="GO" id="GO:0016208">
    <property type="term" value="F:AMP binding"/>
    <property type="evidence" value="ECO:0007669"/>
    <property type="project" value="InterPro"/>
</dbReference>
<dbReference type="GO" id="GO:0005524">
    <property type="term" value="F:ATP binding"/>
    <property type="evidence" value="ECO:0007669"/>
    <property type="project" value="UniProtKB-KW"/>
</dbReference>
<dbReference type="GO" id="GO:0046872">
    <property type="term" value="F:metal ion binding"/>
    <property type="evidence" value="ECO:0007669"/>
    <property type="project" value="UniProtKB-KW"/>
</dbReference>
<dbReference type="GO" id="GO:0019427">
    <property type="term" value="P:acetyl-CoA biosynthetic process from acetate"/>
    <property type="evidence" value="ECO:0007669"/>
    <property type="project" value="InterPro"/>
</dbReference>
<dbReference type="CDD" id="cd05966">
    <property type="entry name" value="ACS"/>
    <property type="match status" value="1"/>
</dbReference>
<dbReference type="FunFam" id="3.30.300.30:FF:000004">
    <property type="entry name" value="Acetyl-coenzyme A synthetase"/>
    <property type="match status" value="1"/>
</dbReference>
<dbReference type="FunFam" id="3.40.50.12780:FF:000001">
    <property type="entry name" value="Acetyl-coenzyme A synthetase"/>
    <property type="match status" value="1"/>
</dbReference>
<dbReference type="Gene3D" id="3.30.300.30">
    <property type="match status" value="1"/>
</dbReference>
<dbReference type="Gene3D" id="3.40.50.12780">
    <property type="entry name" value="N-terminal domain of ligase-like"/>
    <property type="match status" value="1"/>
</dbReference>
<dbReference type="HAMAP" id="MF_01123">
    <property type="entry name" value="Ac_CoA_synth"/>
    <property type="match status" value="1"/>
</dbReference>
<dbReference type="InterPro" id="IPR011904">
    <property type="entry name" value="Ac_CoA_lig"/>
</dbReference>
<dbReference type="InterPro" id="IPR032387">
    <property type="entry name" value="ACAS_N"/>
</dbReference>
<dbReference type="InterPro" id="IPR025110">
    <property type="entry name" value="AMP-bd_C"/>
</dbReference>
<dbReference type="InterPro" id="IPR045851">
    <property type="entry name" value="AMP-bd_C_sf"/>
</dbReference>
<dbReference type="InterPro" id="IPR020845">
    <property type="entry name" value="AMP-binding_CS"/>
</dbReference>
<dbReference type="InterPro" id="IPR000873">
    <property type="entry name" value="AMP-dep_synth/lig_dom"/>
</dbReference>
<dbReference type="InterPro" id="IPR042099">
    <property type="entry name" value="ANL_N_sf"/>
</dbReference>
<dbReference type="NCBIfam" id="TIGR02188">
    <property type="entry name" value="Ac_CoA_lig_AcsA"/>
    <property type="match status" value="1"/>
</dbReference>
<dbReference type="NCBIfam" id="NF001208">
    <property type="entry name" value="PRK00174.1"/>
    <property type="match status" value="1"/>
</dbReference>
<dbReference type="PANTHER" id="PTHR24095">
    <property type="entry name" value="ACETYL-COENZYME A SYNTHETASE"/>
    <property type="match status" value="1"/>
</dbReference>
<dbReference type="PANTHER" id="PTHR24095:SF243">
    <property type="entry name" value="ACETYL-COENZYME A SYNTHETASE"/>
    <property type="match status" value="1"/>
</dbReference>
<dbReference type="Pfam" id="PF16177">
    <property type="entry name" value="ACAS_N"/>
    <property type="match status" value="1"/>
</dbReference>
<dbReference type="Pfam" id="PF00501">
    <property type="entry name" value="AMP-binding"/>
    <property type="match status" value="1"/>
</dbReference>
<dbReference type="Pfam" id="PF13193">
    <property type="entry name" value="AMP-binding_C"/>
    <property type="match status" value="1"/>
</dbReference>
<dbReference type="SUPFAM" id="SSF56801">
    <property type="entry name" value="Acetyl-CoA synthetase-like"/>
    <property type="match status" value="1"/>
</dbReference>
<dbReference type="PROSITE" id="PS00455">
    <property type="entry name" value="AMP_BINDING"/>
    <property type="match status" value="1"/>
</dbReference>
<gene>
    <name evidence="1" type="primary">acsA</name>
    <name type="ordered locus">Maqu_2219</name>
</gene>
<name>ACSA_MARN8</name>
<evidence type="ECO:0000255" key="1">
    <source>
        <dbReference type="HAMAP-Rule" id="MF_01123"/>
    </source>
</evidence>
<keyword id="KW-0007">Acetylation</keyword>
<keyword id="KW-0067">ATP-binding</keyword>
<keyword id="KW-0436">Ligase</keyword>
<keyword id="KW-0460">Magnesium</keyword>
<keyword id="KW-0479">Metal-binding</keyword>
<keyword id="KW-0547">Nucleotide-binding</keyword>
<protein>
    <recommendedName>
        <fullName evidence="1">Acetyl-coenzyme A synthetase</fullName>
        <shortName evidence="1">AcCoA synthetase</shortName>
        <shortName evidence="1">Acs</shortName>
        <ecNumber evidence="1">6.2.1.1</ecNumber>
    </recommendedName>
    <alternativeName>
        <fullName evidence="1">Acetate--CoA ligase</fullName>
    </alternativeName>
    <alternativeName>
        <fullName evidence="1">Acyl-activating enzyme</fullName>
    </alternativeName>
</protein>
<sequence>MTDKQVYPVSPEVAERALVNKSQYEEMYRQSVEDPNTFWGEHGKRIDWIKPFTKVKNSTYDYNNLSIKWFEDGVLNASANCLDRHLEQRGDQTAIIFEGDDPSVSRNVTYRELYEETCKFANVLKDQGVKKGDVVTIYMPMIVETAVAMLACARIGAIHSVVFGGFSPEALAARIVNGKSRFVITADEGLRGGRAIPLKKNVDSALKHEDDAKVDKVIVVSRTGNDQVPWTEGRDLRYEDLMKNASAECQPEPMNAEDPLFMLYTSGSTGAPKGVLHTTGGYMVYASMTHQYVFDYHDGDVYWCTADFGWVTGHSYILYGPLANGAITLLFEGVPNYPDSSRMGQVVDKHKVNILYTAPTAIRALMAQGESCMDGTTRGSLKLLGSVGEPINPEAWEWYHRVIGNSKCPIVDTWWQTETGGILISPLPGAVDLKPGSATLPFFGVQPALVDNEGNILEGKTEGNLVILDSWPGQMRTIYGDHERFVQTYFSTYKGMYFTGDGARRDEDGYYWITGRVDDVLNVSGHRLGTAEVESALVAHDKVAEAAVVGYPHDIKGQGIYVYVTLVQGEEPSDELKKELVQWVRKEIGPIASPDVIQWAPGLPKTRSGKIMRRILRKIAANEHDQLGDTSTLADPGVVDELISSRAFK</sequence>
<comment type="function">
    <text evidence="1">Catalyzes the conversion of acetate into acetyl-CoA (AcCoA), an essential intermediate at the junction of anabolic and catabolic pathways. AcsA undergoes a two-step reaction. In the first half reaction, AcsA combines acetate with ATP to form acetyl-adenylate (AcAMP) intermediate. In the second half reaction, it can then transfer the acetyl group from AcAMP to the sulfhydryl group of CoA, forming the product AcCoA.</text>
</comment>
<comment type="catalytic activity">
    <reaction evidence="1">
        <text>acetate + ATP + CoA = acetyl-CoA + AMP + diphosphate</text>
        <dbReference type="Rhea" id="RHEA:23176"/>
        <dbReference type="ChEBI" id="CHEBI:30089"/>
        <dbReference type="ChEBI" id="CHEBI:30616"/>
        <dbReference type="ChEBI" id="CHEBI:33019"/>
        <dbReference type="ChEBI" id="CHEBI:57287"/>
        <dbReference type="ChEBI" id="CHEBI:57288"/>
        <dbReference type="ChEBI" id="CHEBI:456215"/>
        <dbReference type="EC" id="6.2.1.1"/>
    </reaction>
</comment>
<comment type="cofactor">
    <cofactor evidence="1">
        <name>Mg(2+)</name>
        <dbReference type="ChEBI" id="CHEBI:18420"/>
    </cofactor>
</comment>
<comment type="PTM">
    <text evidence="1">Acetylated. Deacetylation by the SIR2-homolog deacetylase activates the enzyme.</text>
</comment>
<comment type="similarity">
    <text evidence="1">Belongs to the ATP-dependent AMP-binding enzyme family.</text>
</comment>
<reference key="1">
    <citation type="journal article" date="2011" name="Appl. Environ. Microbiol.">
        <title>Genomic potential of Marinobacter aquaeolei, a biogeochemical 'opportunitroph'.</title>
        <authorList>
            <person name="Singer E."/>
            <person name="Webb E.A."/>
            <person name="Nelson W.C."/>
            <person name="Heidelberg J.F."/>
            <person name="Ivanova N."/>
            <person name="Pati A."/>
            <person name="Edwards K.J."/>
        </authorList>
    </citation>
    <scope>NUCLEOTIDE SEQUENCE [LARGE SCALE GENOMIC DNA]</scope>
    <source>
        <strain>ATCC 700491 / DSM 11845 / VT8</strain>
    </source>
</reference>